<proteinExistence type="inferred from homology"/>
<gene>
    <name evidence="1" type="primary">miaA</name>
    <name type="ordered locus">PA0638</name>
</gene>
<organism>
    <name type="scientific">Phytoplasma australiense</name>
    <dbReference type="NCBI Taxonomy" id="59748"/>
    <lineage>
        <taxon>Bacteria</taxon>
        <taxon>Bacillati</taxon>
        <taxon>Mycoplasmatota</taxon>
        <taxon>Mollicutes</taxon>
        <taxon>Acholeplasmatales</taxon>
        <taxon>Acholeplasmataceae</taxon>
        <taxon>Candidatus Phytoplasma</taxon>
        <taxon>16SrXII (Stolbur group)</taxon>
    </lineage>
</organism>
<protein>
    <recommendedName>
        <fullName evidence="1">tRNA dimethylallyltransferase</fullName>
        <ecNumber evidence="1">2.5.1.75</ecNumber>
    </recommendedName>
    <alternativeName>
        <fullName evidence="1">Dimethylallyl diphosphate:tRNA dimethylallyltransferase</fullName>
        <shortName evidence="1">DMAPP:tRNA dimethylallyltransferase</shortName>
        <shortName evidence="1">DMATase</shortName>
    </alternativeName>
    <alternativeName>
        <fullName evidence="1">Isopentenyl-diphosphate:tRNA isopentenyltransferase</fullName>
        <shortName evidence="1">IPP transferase</shortName>
        <shortName evidence="1">IPPT</shortName>
        <shortName evidence="1">IPTase</shortName>
    </alternativeName>
</protein>
<sequence length="290" mass="33599">MKKIIAITGPTASGKTSLSIKIAKKFNLEIINCDSTQIYQQYNIGTAKITKEEMEGVKHHLLDFLPPEEKYSIYHFQKSARAKIKDINNPLFVGGSGLYLKAALFDYELTPKPLMPQNVCEQDLQKMLAIIKEKDPQLVLDTKNPLRIISSYYDIVSGHLRSQKTKKNVPLYSLLIFYLDIDRKELKNRVVLRLEKMLNEGFVEEVKNIQTNFPQANFNIIGYREIKDFLEGKYSITEAKNKICQKTMQYAKRQKTWFKNQLQPVVVDALSPSLEKKVFQLVFDFLHKRS</sequence>
<accession>B1VAJ9</accession>
<comment type="function">
    <text evidence="1">Catalyzes the transfer of a dimethylallyl group onto the adenine at position 37 in tRNAs that read codons beginning with uridine, leading to the formation of N6-(dimethylallyl)adenosine (i(6)A).</text>
</comment>
<comment type="catalytic activity">
    <reaction evidence="1">
        <text>adenosine(37) in tRNA + dimethylallyl diphosphate = N(6)-dimethylallyladenosine(37) in tRNA + diphosphate</text>
        <dbReference type="Rhea" id="RHEA:26482"/>
        <dbReference type="Rhea" id="RHEA-COMP:10162"/>
        <dbReference type="Rhea" id="RHEA-COMP:10375"/>
        <dbReference type="ChEBI" id="CHEBI:33019"/>
        <dbReference type="ChEBI" id="CHEBI:57623"/>
        <dbReference type="ChEBI" id="CHEBI:74411"/>
        <dbReference type="ChEBI" id="CHEBI:74415"/>
        <dbReference type="EC" id="2.5.1.75"/>
    </reaction>
</comment>
<comment type="cofactor">
    <cofactor evidence="1">
        <name>Mg(2+)</name>
        <dbReference type="ChEBI" id="CHEBI:18420"/>
    </cofactor>
</comment>
<comment type="subunit">
    <text evidence="1">Monomer.</text>
</comment>
<comment type="similarity">
    <text evidence="1">Belongs to the IPP transferase family.</text>
</comment>
<feature type="chain" id="PRO_1000191862" description="tRNA dimethylallyltransferase">
    <location>
        <begin position="1"/>
        <end position="290"/>
    </location>
</feature>
<feature type="region of interest" description="Interaction with substrate tRNA" evidence="1">
    <location>
        <begin position="34"/>
        <end position="37"/>
    </location>
</feature>
<feature type="binding site" evidence="1">
    <location>
        <begin position="9"/>
        <end position="16"/>
    </location>
    <ligand>
        <name>ATP</name>
        <dbReference type="ChEBI" id="CHEBI:30616"/>
    </ligand>
</feature>
<feature type="binding site" evidence="1">
    <location>
        <begin position="11"/>
        <end position="16"/>
    </location>
    <ligand>
        <name>substrate</name>
    </ligand>
</feature>
<feature type="site" description="Interaction with substrate tRNA" evidence="1">
    <location>
        <position position="96"/>
    </location>
</feature>
<reference key="1">
    <citation type="journal article" date="2008" name="J. Bacteriol.">
        <title>Comparative genome analysis of 'Candidatus Phytoplasma australiense' (subgroup tuf-Australia I; rp-A) and 'Ca. Phytoplasma asteris' strains OY-M and AY-WB.</title>
        <authorList>
            <person name="Tran-Nguyen L.T."/>
            <person name="Kube M."/>
            <person name="Schneider B."/>
            <person name="Reinhardt R."/>
            <person name="Gibb K.S."/>
        </authorList>
    </citation>
    <scope>NUCLEOTIDE SEQUENCE [LARGE SCALE GENOMIC DNA]</scope>
</reference>
<evidence type="ECO:0000255" key="1">
    <source>
        <dbReference type="HAMAP-Rule" id="MF_00185"/>
    </source>
</evidence>
<keyword id="KW-0067">ATP-binding</keyword>
<keyword id="KW-0460">Magnesium</keyword>
<keyword id="KW-0547">Nucleotide-binding</keyword>
<keyword id="KW-1185">Reference proteome</keyword>
<keyword id="KW-0808">Transferase</keyword>
<keyword id="KW-0819">tRNA processing</keyword>
<dbReference type="EC" id="2.5.1.75" evidence="1"/>
<dbReference type="EMBL" id="AM422018">
    <property type="protein sequence ID" value="CAM11972.1"/>
    <property type="molecule type" value="Genomic_DNA"/>
</dbReference>
<dbReference type="SMR" id="B1VAJ9"/>
<dbReference type="STRING" id="59748.PA0638"/>
<dbReference type="KEGG" id="pal:PA0638"/>
<dbReference type="eggNOG" id="COG0324">
    <property type="taxonomic scope" value="Bacteria"/>
</dbReference>
<dbReference type="Proteomes" id="UP000008323">
    <property type="component" value="Chromosome"/>
</dbReference>
<dbReference type="GO" id="GO:0005524">
    <property type="term" value="F:ATP binding"/>
    <property type="evidence" value="ECO:0007669"/>
    <property type="project" value="UniProtKB-UniRule"/>
</dbReference>
<dbReference type="GO" id="GO:0052381">
    <property type="term" value="F:tRNA dimethylallyltransferase activity"/>
    <property type="evidence" value="ECO:0007669"/>
    <property type="project" value="UniProtKB-UniRule"/>
</dbReference>
<dbReference type="GO" id="GO:0006400">
    <property type="term" value="P:tRNA modification"/>
    <property type="evidence" value="ECO:0007669"/>
    <property type="project" value="TreeGrafter"/>
</dbReference>
<dbReference type="Gene3D" id="3.40.50.300">
    <property type="entry name" value="P-loop containing nucleotide triphosphate hydrolases"/>
    <property type="match status" value="1"/>
</dbReference>
<dbReference type="HAMAP" id="MF_00185">
    <property type="entry name" value="IPP_trans"/>
    <property type="match status" value="1"/>
</dbReference>
<dbReference type="InterPro" id="IPR039657">
    <property type="entry name" value="Dimethylallyltransferase"/>
</dbReference>
<dbReference type="InterPro" id="IPR018022">
    <property type="entry name" value="IPT"/>
</dbReference>
<dbReference type="InterPro" id="IPR027417">
    <property type="entry name" value="P-loop_NTPase"/>
</dbReference>
<dbReference type="NCBIfam" id="TIGR00174">
    <property type="entry name" value="miaA"/>
    <property type="match status" value="1"/>
</dbReference>
<dbReference type="PANTHER" id="PTHR11088">
    <property type="entry name" value="TRNA DIMETHYLALLYLTRANSFERASE"/>
    <property type="match status" value="1"/>
</dbReference>
<dbReference type="PANTHER" id="PTHR11088:SF60">
    <property type="entry name" value="TRNA DIMETHYLALLYLTRANSFERASE"/>
    <property type="match status" value="1"/>
</dbReference>
<dbReference type="Pfam" id="PF01715">
    <property type="entry name" value="IPPT"/>
    <property type="match status" value="1"/>
</dbReference>
<dbReference type="SUPFAM" id="SSF52540">
    <property type="entry name" value="P-loop containing nucleoside triphosphate hydrolases"/>
    <property type="match status" value="2"/>
</dbReference>
<name>MIAA_PHYAS</name>